<proteinExistence type="inferred from homology"/>
<dbReference type="EC" id="2.7.1.33" evidence="1"/>
<dbReference type="EMBL" id="AM181176">
    <property type="protein sequence ID" value="CAY52791.1"/>
    <property type="molecule type" value="Genomic_DNA"/>
</dbReference>
<dbReference type="RefSeq" id="WP_015886141.1">
    <property type="nucleotide sequence ID" value="NC_012660.1"/>
</dbReference>
<dbReference type="SMR" id="C3K2Z1"/>
<dbReference type="STRING" id="294.SRM1_05199"/>
<dbReference type="PATRIC" id="fig|216595.4.peg.5665"/>
<dbReference type="eggNOG" id="COG1521">
    <property type="taxonomic scope" value="Bacteria"/>
</dbReference>
<dbReference type="HOGENOM" id="CLU_066627_0_1_6"/>
<dbReference type="OrthoDB" id="9781305at2"/>
<dbReference type="UniPathway" id="UPA00241">
    <property type="reaction ID" value="UER00352"/>
</dbReference>
<dbReference type="GO" id="GO:0005737">
    <property type="term" value="C:cytoplasm"/>
    <property type="evidence" value="ECO:0007669"/>
    <property type="project" value="UniProtKB-SubCell"/>
</dbReference>
<dbReference type="GO" id="GO:0005524">
    <property type="term" value="F:ATP binding"/>
    <property type="evidence" value="ECO:0007669"/>
    <property type="project" value="UniProtKB-UniRule"/>
</dbReference>
<dbReference type="GO" id="GO:0046872">
    <property type="term" value="F:metal ion binding"/>
    <property type="evidence" value="ECO:0007669"/>
    <property type="project" value="UniProtKB-KW"/>
</dbReference>
<dbReference type="GO" id="GO:0004594">
    <property type="term" value="F:pantothenate kinase activity"/>
    <property type="evidence" value="ECO:0007669"/>
    <property type="project" value="UniProtKB-UniRule"/>
</dbReference>
<dbReference type="GO" id="GO:0015937">
    <property type="term" value="P:coenzyme A biosynthetic process"/>
    <property type="evidence" value="ECO:0007669"/>
    <property type="project" value="UniProtKB-UniRule"/>
</dbReference>
<dbReference type="CDD" id="cd24015">
    <property type="entry name" value="ASKHA_NBD_PanK-III"/>
    <property type="match status" value="1"/>
</dbReference>
<dbReference type="Gene3D" id="3.30.420.40">
    <property type="match status" value="2"/>
</dbReference>
<dbReference type="HAMAP" id="MF_01274">
    <property type="entry name" value="Pantothen_kinase_3"/>
    <property type="match status" value="1"/>
</dbReference>
<dbReference type="InterPro" id="IPR043129">
    <property type="entry name" value="ATPase_NBD"/>
</dbReference>
<dbReference type="InterPro" id="IPR004619">
    <property type="entry name" value="Type_III_PanK"/>
</dbReference>
<dbReference type="NCBIfam" id="TIGR00671">
    <property type="entry name" value="baf"/>
    <property type="match status" value="1"/>
</dbReference>
<dbReference type="NCBIfam" id="NF009857">
    <property type="entry name" value="PRK13322.1-2"/>
    <property type="match status" value="1"/>
</dbReference>
<dbReference type="NCBIfam" id="NF009859">
    <property type="entry name" value="PRK13322.1-4"/>
    <property type="match status" value="1"/>
</dbReference>
<dbReference type="PANTHER" id="PTHR34265">
    <property type="entry name" value="TYPE III PANTOTHENATE KINASE"/>
    <property type="match status" value="1"/>
</dbReference>
<dbReference type="PANTHER" id="PTHR34265:SF1">
    <property type="entry name" value="TYPE III PANTOTHENATE KINASE"/>
    <property type="match status" value="1"/>
</dbReference>
<dbReference type="Pfam" id="PF03309">
    <property type="entry name" value="Pan_kinase"/>
    <property type="match status" value="1"/>
</dbReference>
<dbReference type="SUPFAM" id="SSF53067">
    <property type="entry name" value="Actin-like ATPase domain"/>
    <property type="match status" value="2"/>
</dbReference>
<sequence length="249" mass="26937">MILELDCGNSFIKWRVLDSGSASASAEGVVRSDLALIENLSALPRLLLTRCRLVSVRALEETSKLVEALHEAFGVTVSCAAPAREMAGVRNGYEDFERLGLDRWLAMLGGFKLARGACLVLDFGTAATADFIAADGEHLGGFICPGMPLMRNQLRTHTRKIRYDDAAAERALERLSPGRTTVEAVERGCTLMLRGFVLTQLELARSYWGDDFTVFLTGGDADLVVDAVPQAELVPDLVFVGLAMACPLS</sequence>
<reference key="1">
    <citation type="journal article" date="2009" name="Genome Biol.">
        <title>Genomic and genetic analyses of diversity and plant interactions of Pseudomonas fluorescens.</title>
        <authorList>
            <person name="Silby M.W."/>
            <person name="Cerdeno-Tarraga A.M."/>
            <person name="Vernikos G.S."/>
            <person name="Giddens S.R."/>
            <person name="Jackson R.W."/>
            <person name="Preston G.M."/>
            <person name="Zhang X.-X."/>
            <person name="Moon C.D."/>
            <person name="Gehrig S.M."/>
            <person name="Godfrey S.A.C."/>
            <person name="Knight C.G."/>
            <person name="Malone J.G."/>
            <person name="Robinson Z."/>
            <person name="Spiers A.J."/>
            <person name="Harris S."/>
            <person name="Challis G.L."/>
            <person name="Yaxley A.M."/>
            <person name="Harris D."/>
            <person name="Seeger K."/>
            <person name="Murphy L."/>
            <person name="Rutter S."/>
            <person name="Squares R."/>
            <person name="Quail M.A."/>
            <person name="Saunders E."/>
            <person name="Mavromatis K."/>
            <person name="Brettin T.S."/>
            <person name="Bentley S.D."/>
            <person name="Hothersall J."/>
            <person name="Stephens E."/>
            <person name="Thomas C.M."/>
            <person name="Parkhill J."/>
            <person name="Levy S.B."/>
            <person name="Rainey P.B."/>
            <person name="Thomson N.R."/>
        </authorList>
    </citation>
    <scope>NUCLEOTIDE SEQUENCE [LARGE SCALE GENOMIC DNA]</scope>
    <source>
        <strain>SBW25</strain>
    </source>
</reference>
<evidence type="ECO:0000255" key="1">
    <source>
        <dbReference type="HAMAP-Rule" id="MF_01274"/>
    </source>
</evidence>
<comment type="function">
    <text evidence="1">Catalyzes the phosphorylation of pantothenate (Pan), the first step in CoA biosynthesis.</text>
</comment>
<comment type="catalytic activity">
    <reaction evidence="1">
        <text>(R)-pantothenate + ATP = (R)-4'-phosphopantothenate + ADP + H(+)</text>
        <dbReference type="Rhea" id="RHEA:16373"/>
        <dbReference type="ChEBI" id="CHEBI:10986"/>
        <dbReference type="ChEBI" id="CHEBI:15378"/>
        <dbReference type="ChEBI" id="CHEBI:29032"/>
        <dbReference type="ChEBI" id="CHEBI:30616"/>
        <dbReference type="ChEBI" id="CHEBI:456216"/>
        <dbReference type="EC" id="2.7.1.33"/>
    </reaction>
</comment>
<comment type="cofactor">
    <cofactor evidence="1">
        <name>NH4(+)</name>
        <dbReference type="ChEBI" id="CHEBI:28938"/>
    </cofactor>
    <cofactor evidence="1">
        <name>K(+)</name>
        <dbReference type="ChEBI" id="CHEBI:29103"/>
    </cofactor>
    <text evidence="1">A monovalent cation. Ammonium or potassium.</text>
</comment>
<comment type="pathway">
    <text evidence="1">Cofactor biosynthesis; coenzyme A biosynthesis; CoA from (R)-pantothenate: step 1/5.</text>
</comment>
<comment type="subunit">
    <text evidence="1">Homodimer.</text>
</comment>
<comment type="subcellular location">
    <subcellularLocation>
        <location evidence="1">Cytoplasm</location>
    </subcellularLocation>
</comment>
<comment type="similarity">
    <text evidence="1">Belongs to the type III pantothenate kinase family.</text>
</comment>
<protein>
    <recommendedName>
        <fullName evidence="1">Type III pantothenate kinase</fullName>
        <ecNumber evidence="1">2.7.1.33</ecNumber>
    </recommendedName>
    <alternativeName>
        <fullName evidence="1">PanK-III</fullName>
    </alternativeName>
    <alternativeName>
        <fullName evidence="1">Pantothenic acid kinase</fullName>
    </alternativeName>
</protein>
<keyword id="KW-0067">ATP-binding</keyword>
<keyword id="KW-0173">Coenzyme A biosynthesis</keyword>
<keyword id="KW-0963">Cytoplasm</keyword>
<keyword id="KW-0418">Kinase</keyword>
<keyword id="KW-0479">Metal-binding</keyword>
<keyword id="KW-0547">Nucleotide-binding</keyword>
<keyword id="KW-0630">Potassium</keyword>
<keyword id="KW-0808">Transferase</keyword>
<organism>
    <name type="scientific">Pseudomonas fluorescens (strain SBW25)</name>
    <dbReference type="NCBI Taxonomy" id="216595"/>
    <lineage>
        <taxon>Bacteria</taxon>
        <taxon>Pseudomonadati</taxon>
        <taxon>Pseudomonadota</taxon>
        <taxon>Gammaproteobacteria</taxon>
        <taxon>Pseudomonadales</taxon>
        <taxon>Pseudomonadaceae</taxon>
        <taxon>Pseudomonas</taxon>
    </lineage>
</organism>
<gene>
    <name evidence="1" type="primary">coaX</name>
    <name type="ordered locus">PFLU_5542</name>
</gene>
<accession>C3K2Z1</accession>
<feature type="chain" id="PRO_1000214193" description="Type III pantothenate kinase">
    <location>
        <begin position="1"/>
        <end position="249"/>
    </location>
</feature>
<feature type="active site" description="Proton acceptor" evidence="1">
    <location>
        <position position="102"/>
    </location>
</feature>
<feature type="binding site" evidence="1">
    <location>
        <begin position="6"/>
        <end position="13"/>
    </location>
    <ligand>
        <name>ATP</name>
        <dbReference type="ChEBI" id="CHEBI:30616"/>
    </ligand>
</feature>
<feature type="binding site" evidence="1">
    <location>
        <position position="93"/>
    </location>
    <ligand>
        <name>substrate</name>
    </ligand>
</feature>
<feature type="binding site" evidence="1">
    <location>
        <begin position="100"/>
        <end position="103"/>
    </location>
    <ligand>
        <name>substrate</name>
    </ligand>
</feature>
<feature type="binding site" evidence="1">
    <location>
        <position position="122"/>
    </location>
    <ligand>
        <name>K(+)</name>
        <dbReference type="ChEBI" id="CHEBI:29103"/>
    </ligand>
</feature>
<feature type="binding site" evidence="1">
    <location>
        <position position="125"/>
    </location>
    <ligand>
        <name>ATP</name>
        <dbReference type="ChEBI" id="CHEBI:30616"/>
    </ligand>
</feature>
<feature type="binding site" evidence="1">
    <location>
        <position position="181"/>
    </location>
    <ligand>
        <name>substrate</name>
    </ligand>
</feature>
<name>COAX_PSEFS</name>